<name>KATG_METB6</name>
<evidence type="ECO:0000255" key="1">
    <source>
        <dbReference type="HAMAP-Rule" id="MF_01961"/>
    </source>
</evidence>
<evidence type="ECO:0000256" key="2">
    <source>
        <dbReference type="SAM" id="MobiDB-lite"/>
    </source>
</evidence>
<proteinExistence type="inferred from homology"/>
<sequence length="733" mass="80523">MTDDSTCPVTGGADKQVTGRGQSYRDWWPNQPNLRVLSQHSPRSNPMGGEFNYAEEFKKLDFAAVKADLRALMTSSQEWWPADFGHYGPLFIRMAWHSAGTYRTLDGRGGAGSGQQRFPPLNSWPDNVNLDKARRLLWPIKKKYGRKISWADLMILAGNVALESMGFETFGFAGGRVDTWEPDEDVYWGSENTWLGDKRYSGDRKLENPLAAVQMGLIYVNPEGPNGKPDPVAAAKDIRETFARMAMNDEETVALIAGGHSFGKTHGAGPASHVGPEPEAAPIEQQGLGWKSSFGTGKGGDAIGSGLEVTWTSTPTKWSNNFFRILFSYEWELTKSPAGAYQWQPKDGAGAGTIPDAHDKNKRRAPTMLTTDLSLRFDPVYEKISRHFYENPDQLADAFARAWFKLTHRDMGPRTRYLGPEVPKEALIWQDPIPAVNHTLIGPREITFLKRKILASGLSIPELVLTAWASASTFRGSDKRGGANGARIRLAPQKDWEVNEPARLRKVLAVLEGIQQEFNKTATGGKKVSLADLIVLAGCAGVWKAAKNGGHKVTVPFTPGRMDATQEQTDVNSFAVLEPKADGFRNYLKGPYAVSAEELLVDKAQLLTLSAPEMTVLIGGLRVIGATYGQATHGVFTTLPGALTNDFFTHLLDMGTEWKPVAGNPDVFEGSDRKTGEPKWTGTRVDLIFGANAQLRAIAEVYASADGEEKFAQDFVAAWAKVMNLDRFDLAQK</sequence>
<reference key="1">
    <citation type="journal article" date="2015" name="Microbiology">
        <title>Genome of Methanoregula boonei 6A8 reveals adaptations to oligotrophic peatland environments.</title>
        <authorList>
            <person name="Braeuer S."/>
            <person name="Cadillo-Quiroz H."/>
            <person name="Kyrpides N."/>
            <person name="Woyke T."/>
            <person name="Goodwin L."/>
            <person name="Detter C."/>
            <person name="Podell S."/>
            <person name="Yavitt J.B."/>
            <person name="Zinder S.H."/>
        </authorList>
    </citation>
    <scope>NUCLEOTIDE SEQUENCE [LARGE SCALE GENOMIC DNA]</scope>
    <source>
        <strain>DSM 21154 / JCM 14090 / 6A8</strain>
    </source>
</reference>
<comment type="function">
    <text evidence="1">Bifunctional enzyme with both catalase and broad-spectrum peroxidase activity.</text>
</comment>
<comment type="catalytic activity">
    <reaction evidence="1">
        <text>H2O2 + AH2 = A + 2 H2O</text>
        <dbReference type="Rhea" id="RHEA:30275"/>
        <dbReference type="ChEBI" id="CHEBI:13193"/>
        <dbReference type="ChEBI" id="CHEBI:15377"/>
        <dbReference type="ChEBI" id="CHEBI:16240"/>
        <dbReference type="ChEBI" id="CHEBI:17499"/>
        <dbReference type="EC" id="1.11.1.21"/>
    </reaction>
</comment>
<comment type="catalytic activity">
    <reaction evidence="1">
        <text>2 H2O2 = O2 + 2 H2O</text>
        <dbReference type="Rhea" id="RHEA:20309"/>
        <dbReference type="ChEBI" id="CHEBI:15377"/>
        <dbReference type="ChEBI" id="CHEBI:15379"/>
        <dbReference type="ChEBI" id="CHEBI:16240"/>
        <dbReference type="EC" id="1.11.1.21"/>
    </reaction>
</comment>
<comment type="cofactor">
    <cofactor evidence="1">
        <name>heme b</name>
        <dbReference type="ChEBI" id="CHEBI:60344"/>
    </cofactor>
    <text evidence="1">Binds 1 heme b (iron(II)-protoporphyrin IX) group per dimer.</text>
</comment>
<comment type="subunit">
    <text evidence="1">Homodimer or homotetramer.</text>
</comment>
<comment type="PTM">
    <text evidence="1">Formation of the three residue Trp-Tyr-Met cross-link is important for the catalase, but not the peroxidase activity of the enzyme.</text>
</comment>
<comment type="similarity">
    <text evidence="1">Belongs to the peroxidase family. Peroxidase/catalase subfamily.</text>
</comment>
<gene>
    <name evidence="1" type="primary">katG</name>
    <name type="ordered locus">Mboo_0959</name>
</gene>
<accession>A7I6W6</accession>
<protein>
    <recommendedName>
        <fullName evidence="1">Catalase-peroxidase</fullName>
        <shortName evidence="1">CP</shortName>
        <ecNumber evidence="1">1.11.1.21</ecNumber>
    </recommendedName>
    <alternativeName>
        <fullName evidence="1">Peroxidase/catalase</fullName>
    </alternativeName>
</protein>
<dbReference type="EC" id="1.11.1.21" evidence="1"/>
<dbReference type="EMBL" id="CP000780">
    <property type="protein sequence ID" value="ABS55477.1"/>
    <property type="molecule type" value="Genomic_DNA"/>
</dbReference>
<dbReference type="RefSeq" id="WP_012106502.1">
    <property type="nucleotide sequence ID" value="NC_009712.1"/>
</dbReference>
<dbReference type="SMR" id="A7I6W6"/>
<dbReference type="STRING" id="456442.Mboo_0959"/>
<dbReference type="PeroxiBase" id="6985">
    <property type="entry name" value="CMbCP01"/>
</dbReference>
<dbReference type="GeneID" id="5412136"/>
<dbReference type="KEGG" id="mbn:Mboo_0959"/>
<dbReference type="eggNOG" id="arCOG04487">
    <property type="taxonomic scope" value="Archaea"/>
</dbReference>
<dbReference type="HOGENOM" id="CLU_025424_2_0_2"/>
<dbReference type="OrthoDB" id="358790at2157"/>
<dbReference type="Proteomes" id="UP000002408">
    <property type="component" value="Chromosome"/>
</dbReference>
<dbReference type="GO" id="GO:0005829">
    <property type="term" value="C:cytosol"/>
    <property type="evidence" value="ECO:0007669"/>
    <property type="project" value="TreeGrafter"/>
</dbReference>
<dbReference type="GO" id="GO:0004096">
    <property type="term" value="F:catalase activity"/>
    <property type="evidence" value="ECO:0007669"/>
    <property type="project" value="UniProtKB-UniRule"/>
</dbReference>
<dbReference type="GO" id="GO:0020037">
    <property type="term" value="F:heme binding"/>
    <property type="evidence" value="ECO:0007669"/>
    <property type="project" value="InterPro"/>
</dbReference>
<dbReference type="GO" id="GO:0046872">
    <property type="term" value="F:metal ion binding"/>
    <property type="evidence" value="ECO:0007669"/>
    <property type="project" value="UniProtKB-KW"/>
</dbReference>
<dbReference type="GO" id="GO:0070301">
    <property type="term" value="P:cellular response to hydrogen peroxide"/>
    <property type="evidence" value="ECO:0007669"/>
    <property type="project" value="TreeGrafter"/>
</dbReference>
<dbReference type="GO" id="GO:0042744">
    <property type="term" value="P:hydrogen peroxide catabolic process"/>
    <property type="evidence" value="ECO:0007669"/>
    <property type="project" value="UniProtKB-KW"/>
</dbReference>
<dbReference type="CDD" id="cd00649">
    <property type="entry name" value="catalase_peroxidase_1"/>
    <property type="match status" value="1"/>
</dbReference>
<dbReference type="CDD" id="cd08200">
    <property type="entry name" value="catalase_peroxidase_2"/>
    <property type="match status" value="1"/>
</dbReference>
<dbReference type="FunFam" id="1.10.420.10:FF:000002">
    <property type="entry name" value="Catalase-peroxidase"/>
    <property type="match status" value="1"/>
</dbReference>
<dbReference type="FunFam" id="1.10.420.10:FF:000004">
    <property type="entry name" value="Catalase-peroxidase"/>
    <property type="match status" value="1"/>
</dbReference>
<dbReference type="FunFam" id="1.10.520.10:FF:000002">
    <property type="entry name" value="Catalase-peroxidase"/>
    <property type="match status" value="1"/>
</dbReference>
<dbReference type="Gene3D" id="1.10.520.10">
    <property type="match status" value="2"/>
</dbReference>
<dbReference type="Gene3D" id="1.10.420.10">
    <property type="entry name" value="Peroxidase, domain 2"/>
    <property type="match status" value="2"/>
</dbReference>
<dbReference type="HAMAP" id="MF_01961">
    <property type="entry name" value="Catal_peroxid"/>
    <property type="match status" value="1"/>
</dbReference>
<dbReference type="InterPro" id="IPR000763">
    <property type="entry name" value="Catalase_peroxidase"/>
</dbReference>
<dbReference type="InterPro" id="IPR002016">
    <property type="entry name" value="Haem_peroxidase"/>
</dbReference>
<dbReference type="InterPro" id="IPR010255">
    <property type="entry name" value="Haem_peroxidase_sf"/>
</dbReference>
<dbReference type="InterPro" id="IPR019794">
    <property type="entry name" value="Peroxidases_AS"/>
</dbReference>
<dbReference type="InterPro" id="IPR019793">
    <property type="entry name" value="Peroxidases_heam-ligand_BS"/>
</dbReference>
<dbReference type="NCBIfam" id="TIGR00198">
    <property type="entry name" value="cat_per_HPI"/>
    <property type="match status" value="1"/>
</dbReference>
<dbReference type="NCBIfam" id="NF011635">
    <property type="entry name" value="PRK15061.1"/>
    <property type="match status" value="1"/>
</dbReference>
<dbReference type="PANTHER" id="PTHR30555:SF0">
    <property type="entry name" value="CATALASE-PEROXIDASE"/>
    <property type="match status" value="1"/>
</dbReference>
<dbReference type="PANTHER" id="PTHR30555">
    <property type="entry name" value="HYDROPEROXIDASE I, BIFUNCTIONAL CATALASE-PEROXIDASE"/>
    <property type="match status" value="1"/>
</dbReference>
<dbReference type="Pfam" id="PF00141">
    <property type="entry name" value="peroxidase"/>
    <property type="match status" value="2"/>
</dbReference>
<dbReference type="PRINTS" id="PR00460">
    <property type="entry name" value="BPEROXIDASE"/>
</dbReference>
<dbReference type="PRINTS" id="PR00458">
    <property type="entry name" value="PEROXIDASE"/>
</dbReference>
<dbReference type="SUPFAM" id="SSF48113">
    <property type="entry name" value="Heme-dependent peroxidases"/>
    <property type="match status" value="2"/>
</dbReference>
<dbReference type="PROSITE" id="PS00435">
    <property type="entry name" value="PEROXIDASE_1"/>
    <property type="match status" value="1"/>
</dbReference>
<dbReference type="PROSITE" id="PS00436">
    <property type="entry name" value="PEROXIDASE_2"/>
    <property type="match status" value="1"/>
</dbReference>
<dbReference type="PROSITE" id="PS50873">
    <property type="entry name" value="PEROXIDASE_4"/>
    <property type="match status" value="2"/>
</dbReference>
<feature type="chain" id="PRO_0000354967" description="Catalase-peroxidase">
    <location>
        <begin position="1"/>
        <end position="733"/>
    </location>
</feature>
<feature type="region of interest" description="Disordered" evidence="2">
    <location>
        <begin position="1"/>
        <end position="24"/>
    </location>
</feature>
<feature type="active site" description="Proton acceptor" evidence="1">
    <location>
        <position position="97"/>
    </location>
</feature>
<feature type="binding site" description="axial binding residue" evidence="1">
    <location>
        <position position="260"/>
    </location>
    <ligand>
        <name>heme b</name>
        <dbReference type="ChEBI" id="CHEBI:60344"/>
    </ligand>
    <ligandPart>
        <name>Fe</name>
        <dbReference type="ChEBI" id="CHEBI:18248"/>
    </ligandPart>
</feature>
<feature type="site" description="Transition state stabilizer" evidence="1">
    <location>
        <position position="93"/>
    </location>
</feature>
<feature type="cross-link" description="Tryptophyl-tyrosyl-methioninium (Trp-Tyr) (with M-245)" evidence="1">
    <location>
        <begin position="96"/>
        <end position="219"/>
    </location>
</feature>
<feature type="cross-link" description="Tryptophyl-tyrosyl-methioninium (Tyr-Met) (with W-96)" evidence="1">
    <location>
        <begin position="219"/>
        <end position="245"/>
    </location>
</feature>
<organism>
    <name type="scientific">Methanoregula boonei (strain DSM 21154 / JCM 14090 / 6A8)</name>
    <dbReference type="NCBI Taxonomy" id="456442"/>
    <lineage>
        <taxon>Archaea</taxon>
        <taxon>Methanobacteriati</taxon>
        <taxon>Methanobacteriota</taxon>
        <taxon>Stenosarchaea group</taxon>
        <taxon>Methanomicrobia</taxon>
        <taxon>Methanomicrobiales</taxon>
        <taxon>Methanoregulaceae</taxon>
        <taxon>Methanoregula</taxon>
    </lineage>
</organism>
<keyword id="KW-0349">Heme</keyword>
<keyword id="KW-0376">Hydrogen peroxide</keyword>
<keyword id="KW-0408">Iron</keyword>
<keyword id="KW-0479">Metal-binding</keyword>
<keyword id="KW-0560">Oxidoreductase</keyword>
<keyword id="KW-0575">Peroxidase</keyword>
<keyword id="KW-1185">Reference proteome</keyword>